<protein>
    <recommendedName>
        <fullName>Uncharacterized protein YNL146W</fullName>
    </recommendedName>
</protein>
<proteinExistence type="evidence at protein level"/>
<sequence length="100" mass="11887">MSNTKHTTSHHMELKRIIILTLLFILIMLIFRNSVSFKMTFQELLPRFYKKNSNSVSNNNRPSSIFSENLVDFDDVNMVDKTRLFIFLFFSFIITIPFMV</sequence>
<name>YNO6_YEAST</name>
<reference key="1">
    <citation type="journal article" date="1995" name="Yeast">
        <title>A 43.5 kb segment of yeast chromosome XIV, which contains MFA2, MEP2, CAP/SRV2, NAM9, FKB1/FPR1/RBP1, MOM22 and CPT1, predicts an adenosine deaminase gene and 14 new open reading frames.</title>
        <authorList>
            <person name="Mallet L."/>
            <person name="Bussereau F."/>
            <person name="Jacquet M."/>
        </authorList>
    </citation>
    <scope>NUCLEOTIDE SEQUENCE [GENOMIC DNA]</scope>
    <source>
        <strain>ATCC 204508 / S288c</strain>
    </source>
</reference>
<reference key="2">
    <citation type="journal article" date="1996" name="Yeast">
        <title>The sequence of 36.8 kb from the left arm of chromosome XIV reveals 24 complete open reading frames: 18 correspond to new genes, one of which encodes a protein similar to the human myotonic dystrophy kinase.</title>
        <authorList>
            <person name="Nasr F."/>
            <person name="Becam A.-M."/>
            <person name="Herbert C.J."/>
        </authorList>
    </citation>
    <scope>NUCLEOTIDE SEQUENCE [GENOMIC DNA]</scope>
    <source>
        <strain>ATCC 96604 / S288c / FY1679</strain>
    </source>
</reference>
<reference key="3">
    <citation type="journal article" date="1997" name="Nature">
        <title>The nucleotide sequence of Saccharomyces cerevisiae chromosome XIV and its evolutionary implications.</title>
        <authorList>
            <person name="Philippsen P."/>
            <person name="Kleine K."/>
            <person name="Poehlmann R."/>
            <person name="Duesterhoeft A."/>
            <person name="Hamberg K."/>
            <person name="Hegemann J.H."/>
            <person name="Obermaier B."/>
            <person name="Urrestarazu L.A."/>
            <person name="Aert R."/>
            <person name="Albermann K."/>
            <person name="Altmann R."/>
            <person name="Andre B."/>
            <person name="Baladron V."/>
            <person name="Ballesta J.P.G."/>
            <person name="Becam A.-M."/>
            <person name="Beinhauer J.D."/>
            <person name="Boskovic J."/>
            <person name="Buitrago M.J."/>
            <person name="Bussereau F."/>
            <person name="Coster F."/>
            <person name="Crouzet M."/>
            <person name="D'Angelo M."/>
            <person name="Dal Pero F."/>
            <person name="De Antoni A."/>
            <person name="del Rey F."/>
            <person name="Doignon F."/>
            <person name="Domdey H."/>
            <person name="Dubois E."/>
            <person name="Fiedler T.A."/>
            <person name="Fleig U."/>
            <person name="Floeth M."/>
            <person name="Fritz C."/>
            <person name="Gaillardin C."/>
            <person name="Garcia-Cantalejo J.M."/>
            <person name="Glansdorff N."/>
            <person name="Goffeau A."/>
            <person name="Gueldener U."/>
            <person name="Herbert C.J."/>
            <person name="Heumann K."/>
            <person name="Heuss-Neitzel D."/>
            <person name="Hilbert H."/>
            <person name="Hinni K."/>
            <person name="Iraqui Houssaini I."/>
            <person name="Jacquet M."/>
            <person name="Jimenez A."/>
            <person name="Jonniaux J.-L."/>
            <person name="Karpfinger-Hartl L."/>
            <person name="Lanfranchi G."/>
            <person name="Lepingle A."/>
            <person name="Levesque H."/>
            <person name="Lyck R."/>
            <person name="Maftahi M."/>
            <person name="Mallet L."/>
            <person name="Maurer C.T.C."/>
            <person name="Messenguy F."/>
            <person name="Mewes H.-W."/>
            <person name="Moestl D."/>
            <person name="Nasr F."/>
            <person name="Nicaud J.-M."/>
            <person name="Niedenthal R.K."/>
            <person name="Pandolfo D."/>
            <person name="Pierard A."/>
            <person name="Piravandi E."/>
            <person name="Planta R.J."/>
            <person name="Pohl T.M."/>
            <person name="Purnelle B."/>
            <person name="Rebischung C."/>
            <person name="Remacha M.A."/>
            <person name="Revuelta J.L."/>
            <person name="Rinke M."/>
            <person name="Saiz J.E."/>
            <person name="Sartorello F."/>
            <person name="Scherens B."/>
            <person name="Sen-Gupta M."/>
            <person name="Soler-Mira A."/>
            <person name="Urbanus J.H.M."/>
            <person name="Valle G."/>
            <person name="Van Dyck L."/>
            <person name="Verhasselt P."/>
            <person name="Vierendeels F."/>
            <person name="Vissers S."/>
            <person name="Voet M."/>
            <person name="Volckaert G."/>
            <person name="Wach A."/>
            <person name="Wambutt R."/>
            <person name="Wedler H."/>
            <person name="Zollner A."/>
            <person name="Hani J."/>
        </authorList>
    </citation>
    <scope>NUCLEOTIDE SEQUENCE [LARGE SCALE GENOMIC DNA]</scope>
    <source>
        <strain>ATCC 204508 / S288c</strain>
    </source>
</reference>
<reference key="4">
    <citation type="journal article" date="2014" name="G3 (Bethesda)">
        <title>The reference genome sequence of Saccharomyces cerevisiae: Then and now.</title>
        <authorList>
            <person name="Engel S.R."/>
            <person name="Dietrich F.S."/>
            <person name="Fisk D.G."/>
            <person name="Binkley G."/>
            <person name="Balakrishnan R."/>
            <person name="Costanzo M.C."/>
            <person name="Dwight S.S."/>
            <person name="Hitz B.C."/>
            <person name="Karra K."/>
            <person name="Nash R.S."/>
            <person name="Weng S."/>
            <person name="Wong E.D."/>
            <person name="Lloyd P."/>
            <person name="Skrzypek M.S."/>
            <person name="Miyasato S.R."/>
            <person name="Simison M."/>
            <person name="Cherry J.M."/>
        </authorList>
    </citation>
    <scope>GENOME REANNOTATION</scope>
    <source>
        <strain>ATCC 204508 / S288c</strain>
    </source>
</reference>
<reference key="5">
    <citation type="journal article" date="2003" name="Nature">
        <title>Global analysis of protein localization in budding yeast.</title>
        <authorList>
            <person name="Huh W.-K."/>
            <person name="Falvo J.V."/>
            <person name="Gerke L.C."/>
            <person name="Carroll A.S."/>
            <person name="Howson R.W."/>
            <person name="Weissman J.S."/>
            <person name="O'Shea E.K."/>
        </authorList>
    </citation>
    <scope>SUBCELLULAR LOCATION [LARGE SCALE ANALYSIS]</scope>
</reference>
<feature type="chain" id="PRO_0000203422" description="Uncharacterized protein YNL146W">
    <location>
        <begin position="1"/>
        <end position="100"/>
    </location>
</feature>
<feature type="transmembrane region" description="Helical" evidence="1">
    <location>
        <begin position="17"/>
        <end position="37"/>
    </location>
</feature>
<feature type="transmembrane region" description="Helical" evidence="1">
    <location>
        <begin position="78"/>
        <end position="98"/>
    </location>
</feature>
<feature type="sequence conflict" description="In Ref. 1; CAA86880." evidence="2" ref="1">
    <original>K</original>
    <variation>I</variation>
    <location>
        <position position="15"/>
    </location>
</feature>
<feature type="sequence conflict" description="In Ref. 1; CAA86880." evidence="2" ref="1">
    <original>T</original>
    <variation>R</variation>
    <location>
        <position position="21"/>
    </location>
</feature>
<evidence type="ECO:0000255" key="1"/>
<evidence type="ECO:0000305" key="2"/>
<keyword id="KW-0256">Endoplasmic reticulum</keyword>
<keyword id="KW-0472">Membrane</keyword>
<keyword id="KW-1185">Reference proteome</keyword>
<keyword id="KW-0812">Transmembrane</keyword>
<keyword id="KW-1133">Transmembrane helix</keyword>
<dbReference type="EMBL" id="Z46843">
    <property type="protein sequence ID" value="CAA86880.1"/>
    <property type="molecule type" value="Genomic_DNA"/>
</dbReference>
<dbReference type="EMBL" id="X92517">
    <property type="protein sequence ID" value="CAA63293.1"/>
    <property type="molecule type" value="Genomic_DNA"/>
</dbReference>
<dbReference type="EMBL" id="Z71422">
    <property type="protein sequence ID" value="CAA96029.1"/>
    <property type="molecule type" value="Genomic_DNA"/>
</dbReference>
<dbReference type="EMBL" id="BK006947">
    <property type="protein sequence ID" value="DAA10403.1"/>
    <property type="molecule type" value="Genomic_DNA"/>
</dbReference>
<dbReference type="PIR" id="S60981">
    <property type="entry name" value="S60981"/>
</dbReference>
<dbReference type="RefSeq" id="NP_014253.3">
    <property type="nucleotide sequence ID" value="NM_001182984.3"/>
</dbReference>
<dbReference type="SMR" id="P53906"/>
<dbReference type="BioGRID" id="35682">
    <property type="interactions" value="75"/>
</dbReference>
<dbReference type="DIP" id="DIP-8009N"/>
<dbReference type="FunCoup" id="P53906">
    <property type="interactions" value="81"/>
</dbReference>
<dbReference type="IntAct" id="P53906">
    <property type="interactions" value="2"/>
</dbReference>
<dbReference type="MINT" id="P53906"/>
<dbReference type="STRING" id="4932.YNL146W"/>
<dbReference type="PaxDb" id="4932-YNL146W"/>
<dbReference type="PeptideAtlas" id="P53906"/>
<dbReference type="EnsemblFungi" id="YNL146W_mRNA">
    <property type="protein sequence ID" value="YNL146W"/>
    <property type="gene ID" value="YNL146W"/>
</dbReference>
<dbReference type="GeneID" id="855576"/>
<dbReference type="KEGG" id="sce:YNL146W"/>
<dbReference type="AGR" id="SGD:S000005090"/>
<dbReference type="SGD" id="S000005090">
    <property type="gene designation" value="YNL146W"/>
</dbReference>
<dbReference type="VEuPathDB" id="FungiDB:YNL146W"/>
<dbReference type="HOGENOM" id="CLU_175726_0_0_1"/>
<dbReference type="InParanoid" id="P53906"/>
<dbReference type="OMA" id="ELLXRFY"/>
<dbReference type="BioCyc" id="YEAST:G3O-33164-MONOMER"/>
<dbReference type="BioGRID-ORCS" id="855576">
    <property type="hits" value="0 hits in 10 CRISPR screens"/>
</dbReference>
<dbReference type="PRO" id="PR:P53906"/>
<dbReference type="Proteomes" id="UP000002311">
    <property type="component" value="Chromosome XIV"/>
</dbReference>
<dbReference type="RNAct" id="P53906">
    <property type="molecule type" value="protein"/>
</dbReference>
<dbReference type="GO" id="GO:0005783">
    <property type="term" value="C:endoplasmic reticulum"/>
    <property type="evidence" value="ECO:0007005"/>
    <property type="project" value="SGD"/>
</dbReference>
<dbReference type="GO" id="GO:0005789">
    <property type="term" value="C:endoplasmic reticulum membrane"/>
    <property type="evidence" value="ECO:0007669"/>
    <property type="project" value="UniProtKB-SubCell"/>
</dbReference>
<accession>P53906</accession>
<accession>D6W137</accession>
<gene>
    <name type="ordered locus">YNL146W</name>
    <name type="ORF">N1203</name>
    <name type="ORF">N1785</name>
</gene>
<organism>
    <name type="scientific">Saccharomyces cerevisiae (strain ATCC 204508 / S288c)</name>
    <name type="common">Baker's yeast</name>
    <dbReference type="NCBI Taxonomy" id="559292"/>
    <lineage>
        <taxon>Eukaryota</taxon>
        <taxon>Fungi</taxon>
        <taxon>Dikarya</taxon>
        <taxon>Ascomycota</taxon>
        <taxon>Saccharomycotina</taxon>
        <taxon>Saccharomycetes</taxon>
        <taxon>Saccharomycetales</taxon>
        <taxon>Saccharomycetaceae</taxon>
        <taxon>Saccharomyces</taxon>
    </lineage>
</organism>
<comment type="subcellular location">
    <subcellularLocation>
        <location evidence="2">Endoplasmic reticulum membrane</location>
        <topology evidence="2">Multi-pass membrane protein</topology>
    </subcellularLocation>
</comment>